<reference key="1">
    <citation type="journal article" date="1998" name="DNA Res.">
        <title>Structural analysis of Arabidopsis thaliana chromosome 5. IV. Sequence features of the regions of 1,456,315 bp covered by nineteen physically assigned P1 and TAC clones.</title>
        <authorList>
            <person name="Sato S."/>
            <person name="Kaneko T."/>
            <person name="Kotani H."/>
            <person name="Nakamura Y."/>
            <person name="Asamizu E."/>
            <person name="Miyajima N."/>
            <person name="Tabata S."/>
        </authorList>
    </citation>
    <scope>NUCLEOTIDE SEQUENCE [LARGE SCALE GENOMIC DNA]</scope>
    <source>
        <strain>cv. Columbia</strain>
    </source>
</reference>
<reference key="2">
    <citation type="journal article" date="2017" name="Plant J.">
        <title>Araport11: a complete reannotation of the Arabidopsis thaliana reference genome.</title>
        <authorList>
            <person name="Cheng C.Y."/>
            <person name="Krishnakumar V."/>
            <person name="Chan A.P."/>
            <person name="Thibaud-Nissen F."/>
            <person name="Schobel S."/>
            <person name="Town C.D."/>
        </authorList>
    </citation>
    <scope>GENOME REANNOTATION</scope>
    <source>
        <strain>cv. Columbia</strain>
    </source>
</reference>
<reference key="3">
    <citation type="submission" date="2008-06" db="EMBL/GenBank/DDBJ databases">
        <title>Arabidopsis ORF clones.</title>
        <authorList>
            <person name="De Los Reyes C."/>
            <person name="Quan R."/>
            <person name="Chen H."/>
            <person name="Bautista V.R."/>
            <person name="Kim C.J."/>
            <person name="Ecker J.R."/>
        </authorList>
    </citation>
    <scope>NUCLEOTIDE SEQUENCE [LARGE SCALE MRNA]</scope>
    <source>
        <strain>cv. Columbia</strain>
    </source>
</reference>
<reference key="4">
    <citation type="journal article" date="2005" name="Plant J.">
        <title>Requirement of aminoacyl-tRNA synthetases for gametogenesis and embryo development in Arabidopsis.</title>
        <authorList>
            <person name="Berg M."/>
            <person name="Rogers R."/>
            <person name="Muralla R."/>
            <person name="Meinke D."/>
        </authorList>
    </citation>
    <scope>SUBCELLULAR LOCATION</scope>
</reference>
<reference key="5">
    <citation type="journal article" date="2005" name="Proc. Natl. Acad. Sci. U.S.A.">
        <title>Dual targeting is the rule for organellar aminoacyl-tRNA synthetases in Arabidopsis thaliana.</title>
        <authorList>
            <person name="Duchene A.-M."/>
            <person name="Giritch A."/>
            <person name="Hoffmann B."/>
            <person name="Cognat V."/>
            <person name="Lancelin D."/>
            <person name="Peeters N.M."/>
            <person name="Zaepfel M."/>
            <person name="Marechal-Drouard L."/>
            <person name="Small I.D."/>
        </authorList>
    </citation>
    <scope>SUBCELLULAR LOCATION</scope>
</reference>
<organism>
    <name type="scientific">Arabidopsis thaliana</name>
    <name type="common">Mouse-ear cress</name>
    <dbReference type="NCBI Taxonomy" id="3702"/>
    <lineage>
        <taxon>Eukaryota</taxon>
        <taxon>Viridiplantae</taxon>
        <taxon>Streptophyta</taxon>
        <taxon>Embryophyta</taxon>
        <taxon>Tracheophyta</taxon>
        <taxon>Spermatophyta</taxon>
        <taxon>Magnoliopsida</taxon>
        <taxon>eudicotyledons</taxon>
        <taxon>Gunneridae</taxon>
        <taxon>Pentapetalae</taxon>
        <taxon>rosids</taxon>
        <taxon>malvids</taxon>
        <taxon>Brassicales</taxon>
        <taxon>Brassicaceae</taxon>
        <taxon>Camelineae</taxon>
        <taxon>Arabidopsis</taxon>
    </lineage>
</organism>
<dbReference type="EC" id="6.1.1.16" evidence="4"/>
<dbReference type="EMBL" id="AB009048">
    <property type="protein sequence ID" value="BAB08639.1"/>
    <property type="status" value="ALT_SEQ"/>
    <property type="molecule type" value="Genomic_DNA"/>
</dbReference>
<dbReference type="EMBL" id="CP002688">
    <property type="protein sequence ID" value="AED94364.1"/>
    <property type="molecule type" value="Genomic_DNA"/>
</dbReference>
<dbReference type="EMBL" id="BT033092">
    <property type="protein sequence ID" value="ACF06122.1"/>
    <property type="molecule type" value="mRNA"/>
</dbReference>
<dbReference type="RefSeq" id="NP_198699.1">
    <property type="nucleotide sequence ID" value="NM_123244.4"/>
</dbReference>
<dbReference type="SMR" id="B3LFA4"/>
<dbReference type="FunCoup" id="B3LFA4">
    <property type="interactions" value="4386"/>
</dbReference>
<dbReference type="STRING" id="3702.B3LFA4"/>
<dbReference type="iPTMnet" id="B3LFA4"/>
<dbReference type="PaxDb" id="3702-AT5G38830.1"/>
<dbReference type="ProteomicsDB" id="228405"/>
<dbReference type="EnsemblPlants" id="AT5G38830.1">
    <property type="protein sequence ID" value="AT5G38830.1"/>
    <property type="gene ID" value="AT5G38830"/>
</dbReference>
<dbReference type="GeneID" id="833874"/>
<dbReference type="Gramene" id="AT5G38830.1">
    <property type="protein sequence ID" value="AT5G38830.1"/>
    <property type="gene ID" value="AT5G38830"/>
</dbReference>
<dbReference type="KEGG" id="ath:AT5G38830"/>
<dbReference type="Araport" id="AT5G38830"/>
<dbReference type="TAIR" id="AT5G38830"/>
<dbReference type="eggNOG" id="KOG2007">
    <property type="taxonomic scope" value="Eukaryota"/>
</dbReference>
<dbReference type="HOGENOM" id="CLU_013528_0_1_1"/>
<dbReference type="InParanoid" id="B3LFA4"/>
<dbReference type="OMA" id="VTDHIEH"/>
<dbReference type="OrthoDB" id="438179at2759"/>
<dbReference type="PhylomeDB" id="B3LFA4"/>
<dbReference type="PRO" id="PR:B3LFA4"/>
<dbReference type="Proteomes" id="UP000006548">
    <property type="component" value="Chromosome 5"/>
</dbReference>
<dbReference type="ExpressionAtlas" id="B3LFA4">
    <property type="expression patterns" value="baseline and differential"/>
</dbReference>
<dbReference type="GO" id="GO:0005829">
    <property type="term" value="C:cytosol"/>
    <property type="evidence" value="ECO:0007005"/>
    <property type="project" value="TAIR"/>
</dbReference>
<dbReference type="GO" id="GO:0005524">
    <property type="term" value="F:ATP binding"/>
    <property type="evidence" value="ECO:0007669"/>
    <property type="project" value="UniProtKB-KW"/>
</dbReference>
<dbReference type="GO" id="GO:0004817">
    <property type="term" value="F:cysteine-tRNA ligase activity"/>
    <property type="evidence" value="ECO:0007669"/>
    <property type="project" value="UniProtKB-EC"/>
</dbReference>
<dbReference type="GO" id="GO:0046872">
    <property type="term" value="F:metal ion binding"/>
    <property type="evidence" value="ECO:0007669"/>
    <property type="project" value="UniProtKB-KW"/>
</dbReference>
<dbReference type="GO" id="GO:0006423">
    <property type="term" value="P:cysteinyl-tRNA aminoacylation"/>
    <property type="evidence" value="ECO:0007669"/>
    <property type="project" value="InterPro"/>
</dbReference>
<dbReference type="CDD" id="cd00672">
    <property type="entry name" value="CysRS_core"/>
    <property type="match status" value="1"/>
</dbReference>
<dbReference type="FunFam" id="3.40.50.620:FF:000009">
    <property type="entry name" value="Cysteine--tRNA ligase"/>
    <property type="match status" value="1"/>
</dbReference>
<dbReference type="Gene3D" id="1.20.120.1910">
    <property type="entry name" value="Cysteine-tRNA ligase, C-terminal anti-codon recognition domain"/>
    <property type="match status" value="1"/>
</dbReference>
<dbReference type="Gene3D" id="3.40.50.620">
    <property type="entry name" value="HUPs"/>
    <property type="match status" value="1"/>
</dbReference>
<dbReference type="HAMAP" id="MF_00041">
    <property type="entry name" value="Cys_tRNA_synth"/>
    <property type="match status" value="1"/>
</dbReference>
<dbReference type="InterPro" id="IPR015803">
    <property type="entry name" value="Cys-tRNA-ligase"/>
</dbReference>
<dbReference type="InterPro" id="IPR024909">
    <property type="entry name" value="Cys-tRNA/MSH_ligase"/>
</dbReference>
<dbReference type="InterPro" id="IPR056411">
    <property type="entry name" value="CysS_C"/>
</dbReference>
<dbReference type="InterPro" id="IPR014729">
    <property type="entry name" value="Rossmann-like_a/b/a_fold"/>
</dbReference>
<dbReference type="InterPro" id="IPR032678">
    <property type="entry name" value="tRNA-synt_1_cat_dom"/>
</dbReference>
<dbReference type="InterPro" id="IPR009080">
    <property type="entry name" value="tRNAsynth_Ia_anticodon-bd"/>
</dbReference>
<dbReference type="NCBIfam" id="TIGR00435">
    <property type="entry name" value="cysS"/>
    <property type="match status" value="1"/>
</dbReference>
<dbReference type="PANTHER" id="PTHR10890:SF26">
    <property type="entry name" value="CYSTEINE--TRNA LIGASE 1, CYTOPLASMIC-RELATED"/>
    <property type="match status" value="1"/>
</dbReference>
<dbReference type="PANTHER" id="PTHR10890">
    <property type="entry name" value="CYSTEINYL-TRNA SYNTHETASE"/>
    <property type="match status" value="1"/>
</dbReference>
<dbReference type="Pfam" id="PF23493">
    <property type="entry name" value="CysS_C"/>
    <property type="match status" value="1"/>
</dbReference>
<dbReference type="Pfam" id="PF01406">
    <property type="entry name" value="tRNA-synt_1e"/>
    <property type="match status" value="1"/>
</dbReference>
<dbReference type="PRINTS" id="PR00983">
    <property type="entry name" value="TRNASYNTHCYS"/>
</dbReference>
<dbReference type="SUPFAM" id="SSF47323">
    <property type="entry name" value="Anticodon-binding domain of a subclass of class I aminoacyl-tRNA synthetases"/>
    <property type="match status" value="1"/>
</dbReference>
<dbReference type="SUPFAM" id="SSF52374">
    <property type="entry name" value="Nucleotidylyl transferase"/>
    <property type="match status" value="1"/>
</dbReference>
<keyword id="KW-0030">Aminoacyl-tRNA synthetase</keyword>
<keyword id="KW-0067">ATP-binding</keyword>
<keyword id="KW-0963">Cytoplasm</keyword>
<keyword id="KW-0436">Ligase</keyword>
<keyword id="KW-0479">Metal-binding</keyword>
<keyword id="KW-0547">Nucleotide-binding</keyword>
<keyword id="KW-0648">Protein biosynthesis</keyword>
<keyword id="KW-1185">Reference proteome</keyword>
<keyword id="KW-0677">Repeat</keyword>
<keyword id="KW-0802">TPR repeat</keyword>
<keyword id="KW-0862">Zinc</keyword>
<proteinExistence type="evidence at transcript level"/>
<sequence>MEAEKMELKLYNTMTQQKEVLIPITPGKIGLYVCGITAYDFSHIGHARAAVSFDVLYRYLKHLDYDVTFVRNFTDVDDKIIDRANKNGEDPLDLSNRFCDEYLVDMGALQCLPPTHQPRVSEHMDNIIKMIEKIIEKDCGYVVEGDVFFSVDKSPNYGKLSGQLLEHTRAGERVAVDSRKRNPADFALWKAAKPDEPSWESPWGPGRPGWHIECSAMSVHYLSPKFDIHGGGADLKFPHHENEIAQTCAACEDSGVNYWLHNGHVTINNEKMAKSKHNFKTIREITASYHPLALRHFLMSAQYRSPLSFTASQLESSSEALYYVYQTLQDLDEGLSPYQDALSEDGGKSEQTAEGKDIIKKLKTEFESKMLDDLNTAHILTGAYQDALKFINASLSKLKKMQKKQRMSMLVSLVEIEKAAREVLDVLGLLTTLSYAEILKEMKLKTLIRAEIGEEGISQLIEERITARKNKDFAKSDEIREKLTRKGIALMDIGKETVWRPCFPSQADSST</sequence>
<name>SYCC2_ARATH</name>
<comment type="catalytic activity">
    <reaction evidence="4">
        <text>tRNA(Cys) + L-cysteine + ATP = L-cysteinyl-tRNA(Cys) + AMP + diphosphate</text>
        <dbReference type="Rhea" id="RHEA:17773"/>
        <dbReference type="Rhea" id="RHEA-COMP:9661"/>
        <dbReference type="Rhea" id="RHEA-COMP:9679"/>
        <dbReference type="ChEBI" id="CHEBI:30616"/>
        <dbReference type="ChEBI" id="CHEBI:33019"/>
        <dbReference type="ChEBI" id="CHEBI:35235"/>
        <dbReference type="ChEBI" id="CHEBI:78442"/>
        <dbReference type="ChEBI" id="CHEBI:78517"/>
        <dbReference type="ChEBI" id="CHEBI:456215"/>
        <dbReference type="EC" id="6.1.1.16"/>
    </reaction>
</comment>
<comment type="cofactor">
    <cofactor evidence="2">
        <name>Zn(2+)</name>
        <dbReference type="ChEBI" id="CHEBI:29105"/>
    </cofactor>
    <text evidence="2">Binds 1 zinc ion per subunit.</text>
</comment>
<comment type="subcellular location">
    <subcellularLocation>
        <location evidence="5 6">Cytoplasm</location>
        <location evidence="5 6">Cytosol</location>
    </subcellularLocation>
</comment>
<comment type="similarity">
    <text evidence="4">Belongs to the class-I aminoacyl-tRNA synthetase family.</text>
</comment>
<comment type="sequence caution" evidence="4">
    <conflict type="erroneous gene model prediction">
        <sequence resource="EMBL-CDS" id="BAB08639"/>
    </conflict>
</comment>
<protein>
    <recommendedName>
        <fullName evidence="4">Cysteine--tRNA ligase 2, cytoplasmic</fullName>
        <ecNumber evidence="4">6.1.1.16</ecNumber>
    </recommendedName>
    <alternativeName>
        <fullName evidence="4">Cysteinyl-tRNA synthetase</fullName>
        <shortName evidence="4">CysRS</shortName>
    </alternativeName>
</protein>
<evidence type="ECO:0000250" key="1"/>
<evidence type="ECO:0000250" key="2">
    <source>
        <dbReference type="UniProtKB" id="P21888"/>
    </source>
</evidence>
<evidence type="ECO:0000255" key="3"/>
<evidence type="ECO:0000305" key="4"/>
<evidence type="ECO:0000305" key="5">
    <source>
    </source>
</evidence>
<evidence type="ECO:0000305" key="6">
    <source>
    </source>
</evidence>
<evidence type="ECO:0000312" key="7">
    <source>
        <dbReference type="Araport" id="AT5G38830"/>
    </source>
</evidence>
<evidence type="ECO:0000312" key="8">
    <source>
        <dbReference type="EMBL" id="BAB08639.1"/>
    </source>
</evidence>
<feature type="chain" id="PRO_0000433557" description="Cysteine--tRNA ligase 2, cytoplasmic">
    <location>
        <begin position="1"/>
        <end position="511"/>
    </location>
</feature>
<feature type="repeat" description="TPR 1" evidence="3">
    <location>
        <begin position="315"/>
        <end position="348"/>
    </location>
</feature>
<feature type="repeat" description="TPR 2" evidence="3">
    <location>
        <begin position="368"/>
        <end position="401"/>
    </location>
</feature>
<feature type="short sequence motif" description="'HIGH' region" evidence="4">
    <location>
        <begin position="36"/>
        <end position="46"/>
    </location>
</feature>
<feature type="short sequence motif" description="'KMSKS' region" evidence="4">
    <location>
        <begin position="271"/>
        <end position="275"/>
    </location>
</feature>
<feature type="binding site" evidence="2">
    <location>
        <position position="34"/>
    </location>
    <ligand>
        <name>Zn(2+)</name>
        <dbReference type="ChEBI" id="CHEBI:29105"/>
    </ligand>
</feature>
<feature type="binding site" evidence="2">
    <location>
        <position position="214"/>
    </location>
    <ligand>
        <name>Zn(2+)</name>
        <dbReference type="ChEBI" id="CHEBI:29105"/>
    </ligand>
</feature>
<feature type="binding site" evidence="2">
    <location>
        <position position="239"/>
    </location>
    <ligand>
        <name>Zn(2+)</name>
        <dbReference type="ChEBI" id="CHEBI:29105"/>
    </ligand>
</feature>
<feature type="binding site" evidence="2">
    <location>
        <position position="243"/>
    </location>
    <ligand>
        <name>Zn(2+)</name>
        <dbReference type="ChEBI" id="CHEBI:29105"/>
    </ligand>
</feature>
<feature type="binding site" evidence="1">
    <location>
        <position position="274"/>
    </location>
    <ligand>
        <name>ATP</name>
        <dbReference type="ChEBI" id="CHEBI:30616"/>
    </ligand>
</feature>
<gene>
    <name evidence="7" type="ordered locus">At5g38830</name>
    <name evidence="8" type="ORF">K15E6.4</name>
</gene>
<accession>B3LFA4</accession>
<accession>Q9FMB9</accession>